<gene>
    <name type="primary">gtaB</name>
    <name type="ordered locus">SAS2386</name>
</gene>
<organism>
    <name type="scientific">Staphylococcus aureus (strain MSSA476)</name>
    <dbReference type="NCBI Taxonomy" id="282459"/>
    <lineage>
        <taxon>Bacteria</taxon>
        <taxon>Bacillati</taxon>
        <taxon>Bacillota</taxon>
        <taxon>Bacilli</taxon>
        <taxon>Bacillales</taxon>
        <taxon>Staphylococcaceae</taxon>
        <taxon>Staphylococcus</taxon>
    </lineage>
</organism>
<name>GTAB_STAAS</name>
<sequence>MKKIKKAIIPAAGLGTRFLPATKAMPKEMLPILDKPTIQYIVEEAARAGIEDIIIVTGRHKRAIEDHFDSQKELEMVLKEKGKSELLEKVQYSTELANIFYVRQKEQKGLGHAISSARQFIGNEPFAVLLGDDIVESEVPAVKQLIDVYEETGHSVIGVQEVPEADTHRYGIIDPLTKNGRQYEVKKFVEKPAQGTAPSNLAIMGRYVLTPEIFDYLKTQKEGAGNEIQLTDAIERMNNDNQVYAYDFEGERYDVGEKLGFVKTTIEYALKDDSMREELTRFIKELGL</sequence>
<dbReference type="EC" id="2.7.7.9"/>
<dbReference type="EMBL" id="BX571857">
    <property type="protein sequence ID" value="CAG44200.1"/>
    <property type="molecule type" value="Genomic_DNA"/>
</dbReference>
<dbReference type="SMR" id="Q6G6H5"/>
<dbReference type="KEGG" id="sas:SAS2386"/>
<dbReference type="HOGENOM" id="CLU_029499_1_2_9"/>
<dbReference type="UniPathway" id="UPA00894"/>
<dbReference type="GO" id="GO:0003983">
    <property type="term" value="F:UTP:glucose-1-phosphate uridylyltransferase activity"/>
    <property type="evidence" value="ECO:0007669"/>
    <property type="project" value="UniProtKB-EC"/>
</dbReference>
<dbReference type="GO" id="GO:0009246">
    <property type="term" value="P:enterobacterial common antigen biosynthetic process"/>
    <property type="evidence" value="ECO:0007669"/>
    <property type="project" value="UniProtKB-UniPathway"/>
</dbReference>
<dbReference type="GO" id="GO:0006011">
    <property type="term" value="P:UDP-alpha-D-glucose metabolic process"/>
    <property type="evidence" value="ECO:0007669"/>
    <property type="project" value="InterPro"/>
</dbReference>
<dbReference type="CDD" id="cd02541">
    <property type="entry name" value="UGPase_prokaryotic"/>
    <property type="match status" value="1"/>
</dbReference>
<dbReference type="Gene3D" id="3.90.550.10">
    <property type="entry name" value="Spore Coat Polysaccharide Biosynthesis Protein SpsA, Chain A"/>
    <property type="match status" value="1"/>
</dbReference>
<dbReference type="InterPro" id="IPR005771">
    <property type="entry name" value="GalU_uridylyltTrfase_bac/arc"/>
</dbReference>
<dbReference type="InterPro" id="IPR005835">
    <property type="entry name" value="NTP_transferase_dom"/>
</dbReference>
<dbReference type="InterPro" id="IPR029044">
    <property type="entry name" value="Nucleotide-diphossugar_trans"/>
</dbReference>
<dbReference type="NCBIfam" id="TIGR01099">
    <property type="entry name" value="galU"/>
    <property type="match status" value="1"/>
</dbReference>
<dbReference type="PANTHER" id="PTHR43197">
    <property type="entry name" value="UTP--GLUCOSE-1-PHOSPHATE URIDYLYLTRANSFERASE"/>
    <property type="match status" value="1"/>
</dbReference>
<dbReference type="PANTHER" id="PTHR43197:SF1">
    <property type="entry name" value="UTP--GLUCOSE-1-PHOSPHATE URIDYLYLTRANSFERASE"/>
    <property type="match status" value="1"/>
</dbReference>
<dbReference type="Pfam" id="PF00483">
    <property type="entry name" value="NTP_transferase"/>
    <property type="match status" value="1"/>
</dbReference>
<dbReference type="SUPFAM" id="SSF53448">
    <property type="entry name" value="Nucleotide-diphospho-sugar transferases"/>
    <property type="match status" value="1"/>
</dbReference>
<feature type="chain" id="PRO_0000308308" description="UTP--glucose-1-phosphate uridylyltransferase">
    <location>
        <begin position="1"/>
        <end position="288"/>
    </location>
</feature>
<protein>
    <recommendedName>
        <fullName>UTP--glucose-1-phosphate uridylyltransferase</fullName>
        <ecNumber>2.7.7.9</ecNumber>
    </recommendedName>
    <alternativeName>
        <fullName>Alpha-D-glucosyl-1-phosphate uridylyltransferase</fullName>
    </alternativeName>
    <alternativeName>
        <fullName>UDP-glucose pyrophosphorylase</fullName>
        <shortName>UDPGP</shortName>
    </alternativeName>
    <alternativeName>
        <fullName>Uridine diphosphoglucose pyrophosphorylase</fullName>
    </alternativeName>
</protein>
<proteinExistence type="inferred from homology"/>
<reference key="1">
    <citation type="journal article" date="2004" name="Proc. Natl. Acad. Sci. U.S.A.">
        <title>Complete genomes of two clinical Staphylococcus aureus strains: evidence for the rapid evolution of virulence and drug resistance.</title>
        <authorList>
            <person name="Holden M.T.G."/>
            <person name="Feil E.J."/>
            <person name="Lindsay J.A."/>
            <person name="Peacock S.J."/>
            <person name="Day N.P.J."/>
            <person name="Enright M.C."/>
            <person name="Foster T.J."/>
            <person name="Moore C.E."/>
            <person name="Hurst L."/>
            <person name="Atkin R."/>
            <person name="Barron A."/>
            <person name="Bason N."/>
            <person name="Bentley S.D."/>
            <person name="Chillingworth C."/>
            <person name="Chillingworth T."/>
            <person name="Churcher C."/>
            <person name="Clark L."/>
            <person name="Corton C."/>
            <person name="Cronin A."/>
            <person name="Doggett J."/>
            <person name="Dowd L."/>
            <person name="Feltwell T."/>
            <person name="Hance Z."/>
            <person name="Harris B."/>
            <person name="Hauser H."/>
            <person name="Holroyd S."/>
            <person name="Jagels K."/>
            <person name="James K.D."/>
            <person name="Lennard N."/>
            <person name="Line A."/>
            <person name="Mayes R."/>
            <person name="Moule S."/>
            <person name="Mungall K."/>
            <person name="Ormond D."/>
            <person name="Quail M.A."/>
            <person name="Rabbinowitsch E."/>
            <person name="Rutherford K.M."/>
            <person name="Sanders M."/>
            <person name="Sharp S."/>
            <person name="Simmonds M."/>
            <person name="Stevens K."/>
            <person name="Whitehead S."/>
            <person name="Barrell B.G."/>
            <person name="Spratt B.G."/>
            <person name="Parkhill J."/>
        </authorList>
    </citation>
    <scope>NUCLEOTIDE SEQUENCE [LARGE SCALE GENOMIC DNA]</scope>
    <source>
        <strain>MSSA476</strain>
    </source>
</reference>
<comment type="function">
    <text evidence="1">Catalyzes the formation of UDP-glucose from glucose-1-phosphate and UTP. This is an intermediate step in the biosynthesis of diglucosyl-diacylglycerol (Glc2-DAG), i.e. the predominant glycolipid found in the S.aureus membrane, which is also used as a membrane anchor for lipoteichoic acid (LTA) (By similarity).</text>
</comment>
<comment type="catalytic activity">
    <reaction>
        <text>alpha-D-glucose 1-phosphate + UTP + H(+) = UDP-alpha-D-glucose + diphosphate</text>
        <dbReference type="Rhea" id="RHEA:19889"/>
        <dbReference type="ChEBI" id="CHEBI:15378"/>
        <dbReference type="ChEBI" id="CHEBI:33019"/>
        <dbReference type="ChEBI" id="CHEBI:46398"/>
        <dbReference type="ChEBI" id="CHEBI:58601"/>
        <dbReference type="ChEBI" id="CHEBI:58885"/>
        <dbReference type="EC" id="2.7.7.9"/>
    </reaction>
</comment>
<comment type="pathway">
    <text>Glycolipid metabolism; diglucosyl-diacylglycerol biosynthesis.</text>
</comment>
<comment type="similarity">
    <text evidence="2">Belongs to the UDPGP type 2 family.</text>
</comment>
<evidence type="ECO:0000250" key="1"/>
<evidence type="ECO:0000305" key="2"/>
<keyword id="KW-0119">Carbohydrate metabolism</keyword>
<keyword id="KW-0548">Nucleotidyltransferase</keyword>
<keyword id="KW-0808">Transferase</keyword>
<accession>Q6G6H5</accession>